<evidence type="ECO:0000255" key="1">
    <source>
        <dbReference type="HAMAP-Rule" id="MF_00444"/>
    </source>
</evidence>
<name>CLPP_STRP8</name>
<gene>
    <name evidence="1" type="primary">clpP</name>
    <name type="synonym">clpP.1</name>
    <name type="ordered locus">spyM18_0446</name>
</gene>
<reference key="1">
    <citation type="journal article" date="2002" name="Proc. Natl. Acad. Sci. U.S.A.">
        <title>Genome sequence and comparative microarray analysis of serotype M18 group A Streptococcus strains associated with acute rheumatic fever outbreaks.</title>
        <authorList>
            <person name="Smoot J.C."/>
            <person name="Barbian K.D."/>
            <person name="Van Gompel J.J."/>
            <person name="Smoot L.M."/>
            <person name="Chaussee M.S."/>
            <person name="Sylva G.L."/>
            <person name="Sturdevant D.E."/>
            <person name="Ricklefs S.M."/>
            <person name="Porcella S.F."/>
            <person name="Parkins L.D."/>
            <person name="Beres S.B."/>
            <person name="Campbell D.S."/>
            <person name="Smith T.M."/>
            <person name="Zhang Q."/>
            <person name="Kapur V."/>
            <person name="Daly J.A."/>
            <person name="Veasy L.G."/>
            <person name="Musser J.M."/>
        </authorList>
    </citation>
    <scope>NUCLEOTIDE SEQUENCE [LARGE SCALE GENOMIC DNA]</scope>
    <source>
        <strain>MGAS8232</strain>
    </source>
</reference>
<organism>
    <name type="scientific">Streptococcus pyogenes serotype M18 (strain MGAS8232)</name>
    <dbReference type="NCBI Taxonomy" id="186103"/>
    <lineage>
        <taxon>Bacteria</taxon>
        <taxon>Bacillati</taxon>
        <taxon>Bacillota</taxon>
        <taxon>Bacilli</taxon>
        <taxon>Lactobacillales</taxon>
        <taxon>Streptococcaceae</taxon>
        <taxon>Streptococcus</taxon>
    </lineage>
</organism>
<accession>P69886</accession>
<accession>P82554</accession>
<accession>Q9A192</accession>
<dbReference type="EC" id="3.4.21.92" evidence="1"/>
<dbReference type="EMBL" id="AE009949">
    <property type="protein sequence ID" value="AAL97182.1"/>
    <property type="molecule type" value="Genomic_DNA"/>
</dbReference>
<dbReference type="RefSeq" id="WP_002985850.1">
    <property type="nucleotide sequence ID" value="NC_003485.1"/>
</dbReference>
<dbReference type="SMR" id="P69886"/>
<dbReference type="MEROPS" id="S14.001"/>
<dbReference type="KEGG" id="spm:spyM18_0446"/>
<dbReference type="HOGENOM" id="CLU_058707_3_2_9"/>
<dbReference type="GO" id="GO:0005737">
    <property type="term" value="C:cytoplasm"/>
    <property type="evidence" value="ECO:0007669"/>
    <property type="project" value="UniProtKB-SubCell"/>
</dbReference>
<dbReference type="GO" id="GO:0009368">
    <property type="term" value="C:endopeptidase Clp complex"/>
    <property type="evidence" value="ECO:0007669"/>
    <property type="project" value="TreeGrafter"/>
</dbReference>
<dbReference type="GO" id="GO:0004176">
    <property type="term" value="F:ATP-dependent peptidase activity"/>
    <property type="evidence" value="ECO:0007669"/>
    <property type="project" value="InterPro"/>
</dbReference>
<dbReference type="GO" id="GO:0051117">
    <property type="term" value="F:ATPase binding"/>
    <property type="evidence" value="ECO:0007669"/>
    <property type="project" value="TreeGrafter"/>
</dbReference>
<dbReference type="GO" id="GO:0004252">
    <property type="term" value="F:serine-type endopeptidase activity"/>
    <property type="evidence" value="ECO:0007669"/>
    <property type="project" value="UniProtKB-UniRule"/>
</dbReference>
<dbReference type="GO" id="GO:0006515">
    <property type="term" value="P:protein quality control for misfolded or incompletely synthesized proteins"/>
    <property type="evidence" value="ECO:0007669"/>
    <property type="project" value="TreeGrafter"/>
</dbReference>
<dbReference type="CDD" id="cd07017">
    <property type="entry name" value="S14_ClpP_2"/>
    <property type="match status" value="1"/>
</dbReference>
<dbReference type="FunFam" id="3.90.226.10:FF:000014">
    <property type="entry name" value="ATP-dependent Clp protease proteolytic subunit"/>
    <property type="match status" value="1"/>
</dbReference>
<dbReference type="Gene3D" id="3.90.226.10">
    <property type="entry name" value="2-enoyl-CoA Hydratase, Chain A, domain 1"/>
    <property type="match status" value="1"/>
</dbReference>
<dbReference type="HAMAP" id="MF_00444">
    <property type="entry name" value="ClpP"/>
    <property type="match status" value="1"/>
</dbReference>
<dbReference type="InterPro" id="IPR001907">
    <property type="entry name" value="ClpP"/>
</dbReference>
<dbReference type="InterPro" id="IPR029045">
    <property type="entry name" value="ClpP/crotonase-like_dom_sf"/>
</dbReference>
<dbReference type="InterPro" id="IPR023562">
    <property type="entry name" value="ClpP/TepA"/>
</dbReference>
<dbReference type="InterPro" id="IPR033135">
    <property type="entry name" value="ClpP_His_AS"/>
</dbReference>
<dbReference type="InterPro" id="IPR018215">
    <property type="entry name" value="ClpP_Ser_AS"/>
</dbReference>
<dbReference type="NCBIfam" id="NF001368">
    <property type="entry name" value="PRK00277.1"/>
    <property type="match status" value="1"/>
</dbReference>
<dbReference type="NCBIfam" id="NF009205">
    <property type="entry name" value="PRK12553.1"/>
    <property type="match status" value="1"/>
</dbReference>
<dbReference type="PANTHER" id="PTHR10381">
    <property type="entry name" value="ATP-DEPENDENT CLP PROTEASE PROTEOLYTIC SUBUNIT"/>
    <property type="match status" value="1"/>
</dbReference>
<dbReference type="PANTHER" id="PTHR10381:SF70">
    <property type="entry name" value="ATP-DEPENDENT CLP PROTEASE PROTEOLYTIC SUBUNIT"/>
    <property type="match status" value="1"/>
</dbReference>
<dbReference type="Pfam" id="PF00574">
    <property type="entry name" value="CLP_protease"/>
    <property type="match status" value="1"/>
</dbReference>
<dbReference type="PRINTS" id="PR00127">
    <property type="entry name" value="CLPPROTEASEP"/>
</dbReference>
<dbReference type="SUPFAM" id="SSF52096">
    <property type="entry name" value="ClpP/crotonase"/>
    <property type="match status" value="1"/>
</dbReference>
<dbReference type="PROSITE" id="PS00382">
    <property type="entry name" value="CLP_PROTEASE_HIS"/>
    <property type="match status" value="1"/>
</dbReference>
<dbReference type="PROSITE" id="PS00381">
    <property type="entry name" value="CLP_PROTEASE_SER"/>
    <property type="match status" value="1"/>
</dbReference>
<keyword id="KW-0963">Cytoplasm</keyword>
<keyword id="KW-0378">Hydrolase</keyword>
<keyword id="KW-0645">Protease</keyword>
<keyword id="KW-0720">Serine protease</keyword>
<sequence length="196" mass="21649">MIPVVIEQTSRGERSYDIYSRLLKDRIIMLTGPVEDNMANSVIAQLLFLDAQDNTKDIYLYVNTPGGSVSAGLAIVDTMNFIKADVQTIVMGMAASMGTVIASSGTKGKRFMLPNAEYMIHQPMGGTGGGTQQTDMAIAAEHLLKTRHRLEKILAQNAGKTIKQIHKDAERDYWMSAEETLAYGFIDEIMENNELK</sequence>
<feature type="chain" id="PRO_0000179675" description="ATP-dependent Clp protease proteolytic subunit">
    <location>
        <begin position="1"/>
        <end position="196"/>
    </location>
</feature>
<feature type="active site" description="Nucleophile" evidence="1">
    <location>
        <position position="96"/>
    </location>
</feature>
<feature type="active site" evidence="1">
    <location>
        <position position="121"/>
    </location>
</feature>
<proteinExistence type="inferred from homology"/>
<comment type="function">
    <text evidence="1">Cleaves peptides in various proteins in a process that requires ATP hydrolysis. Has a chymotrypsin-like activity. Plays a major role in the degradation of misfolded proteins.</text>
</comment>
<comment type="catalytic activity">
    <reaction evidence="1">
        <text>Hydrolysis of proteins to small peptides in the presence of ATP and magnesium. alpha-casein is the usual test substrate. In the absence of ATP, only oligopeptides shorter than five residues are hydrolyzed (such as succinyl-Leu-Tyr-|-NHMec, and Leu-Tyr-Leu-|-Tyr-Trp, in which cleavage of the -Tyr-|-Leu- and -Tyr-|-Trp bonds also occurs).</text>
        <dbReference type="EC" id="3.4.21.92"/>
    </reaction>
</comment>
<comment type="subunit">
    <text evidence="1">Fourteen ClpP subunits assemble into 2 heptameric rings which stack back to back to give a disk-like structure with a central cavity, resembling the structure of eukaryotic proteasomes.</text>
</comment>
<comment type="subcellular location">
    <subcellularLocation>
        <location evidence="1">Cytoplasm</location>
    </subcellularLocation>
</comment>
<comment type="similarity">
    <text evidence="1">Belongs to the peptidase S14 family.</text>
</comment>
<protein>
    <recommendedName>
        <fullName evidence="1">ATP-dependent Clp protease proteolytic subunit</fullName>
        <ecNumber evidence="1">3.4.21.92</ecNumber>
    </recommendedName>
    <alternativeName>
        <fullName evidence="1">Endopeptidase Clp</fullName>
    </alternativeName>
</protein>